<reference key="1">
    <citation type="submission" date="2007-05" db="EMBL/GenBank/DDBJ databases">
        <title>Complete sequence of Geobacter uraniireducens Rf4.</title>
        <authorList>
            <consortium name="US DOE Joint Genome Institute"/>
            <person name="Copeland A."/>
            <person name="Lucas S."/>
            <person name="Lapidus A."/>
            <person name="Barry K."/>
            <person name="Detter J.C."/>
            <person name="Glavina del Rio T."/>
            <person name="Hammon N."/>
            <person name="Israni S."/>
            <person name="Dalin E."/>
            <person name="Tice H."/>
            <person name="Pitluck S."/>
            <person name="Chertkov O."/>
            <person name="Brettin T."/>
            <person name="Bruce D."/>
            <person name="Han C."/>
            <person name="Schmutz J."/>
            <person name="Larimer F."/>
            <person name="Land M."/>
            <person name="Hauser L."/>
            <person name="Kyrpides N."/>
            <person name="Mikhailova N."/>
            <person name="Shelobolina E."/>
            <person name="Aklujkar M."/>
            <person name="Lovley D."/>
            <person name="Richardson P."/>
        </authorList>
    </citation>
    <scope>NUCLEOTIDE SEQUENCE [LARGE SCALE GENOMIC DNA]</scope>
    <source>
        <strain>ATCC BAA-1134 / JCM 13001 / Rf4</strain>
    </source>
</reference>
<feature type="chain" id="PRO_1000085582" description="FMN-dependent NADH:quinone oxidoreductase">
    <location>
        <begin position="1"/>
        <end position="210"/>
    </location>
</feature>
<feature type="binding site" evidence="1">
    <location>
        <begin position="17"/>
        <end position="19"/>
    </location>
    <ligand>
        <name>FMN</name>
        <dbReference type="ChEBI" id="CHEBI:58210"/>
    </ligand>
</feature>
<feature type="binding site" evidence="1">
    <location>
        <begin position="148"/>
        <end position="151"/>
    </location>
    <ligand>
        <name>FMN</name>
        <dbReference type="ChEBI" id="CHEBI:58210"/>
    </ligand>
</feature>
<proteinExistence type="inferred from homology"/>
<evidence type="ECO:0000255" key="1">
    <source>
        <dbReference type="HAMAP-Rule" id="MF_01216"/>
    </source>
</evidence>
<keyword id="KW-0285">Flavoprotein</keyword>
<keyword id="KW-0288">FMN</keyword>
<keyword id="KW-0520">NAD</keyword>
<keyword id="KW-0560">Oxidoreductase</keyword>
<keyword id="KW-1185">Reference proteome</keyword>
<accession>A5GAC6</accession>
<protein>
    <recommendedName>
        <fullName evidence="1">FMN-dependent NADH:quinone oxidoreductase</fullName>
        <ecNumber evidence="1">1.6.5.-</ecNumber>
    </recommendedName>
    <alternativeName>
        <fullName evidence="1">Azo-dye reductase</fullName>
    </alternativeName>
    <alternativeName>
        <fullName evidence="1">FMN-dependent NADH-azo compound oxidoreductase</fullName>
    </alternativeName>
    <alternativeName>
        <fullName evidence="1">FMN-dependent NADH-azoreductase</fullName>
        <ecNumber evidence="1">1.7.1.17</ecNumber>
    </alternativeName>
</protein>
<comment type="function">
    <text evidence="1">Quinone reductase that provides resistance to thiol-specific stress caused by electrophilic quinones.</text>
</comment>
<comment type="function">
    <text evidence="1">Also exhibits azoreductase activity. Catalyzes the reductive cleavage of the azo bond in aromatic azo compounds to the corresponding amines.</text>
</comment>
<comment type="catalytic activity">
    <reaction evidence="1">
        <text>2 a quinone + NADH + H(+) = 2 a 1,4-benzosemiquinone + NAD(+)</text>
        <dbReference type="Rhea" id="RHEA:65952"/>
        <dbReference type="ChEBI" id="CHEBI:15378"/>
        <dbReference type="ChEBI" id="CHEBI:57540"/>
        <dbReference type="ChEBI" id="CHEBI:57945"/>
        <dbReference type="ChEBI" id="CHEBI:132124"/>
        <dbReference type="ChEBI" id="CHEBI:134225"/>
    </reaction>
</comment>
<comment type="catalytic activity">
    <reaction evidence="1">
        <text>N,N-dimethyl-1,4-phenylenediamine + anthranilate + 2 NAD(+) = 2-(4-dimethylaminophenyl)diazenylbenzoate + 2 NADH + 2 H(+)</text>
        <dbReference type="Rhea" id="RHEA:55872"/>
        <dbReference type="ChEBI" id="CHEBI:15378"/>
        <dbReference type="ChEBI" id="CHEBI:15783"/>
        <dbReference type="ChEBI" id="CHEBI:16567"/>
        <dbReference type="ChEBI" id="CHEBI:57540"/>
        <dbReference type="ChEBI" id="CHEBI:57945"/>
        <dbReference type="ChEBI" id="CHEBI:71579"/>
        <dbReference type="EC" id="1.7.1.17"/>
    </reaction>
</comment>
<comment type="cofactor">
    <cofactor evidence="1">
        <name>FMN</name>
        <dbReference type="ChEBI" id="CHEBI:58210"/>
    </cofactor>
    <text evidence="1">Binds 1 FMN per subunit.</text>
</comment>
<comment type="subunit">
    <text evidence="1">Homodimer.</text>
</comment>
<comment type="similarity">
    <text evidence="1">Belongs to the azoreductase type 1 family.</text>
</comment>
<name>AZOR_GEOUR</name>
<gene>
    <name evidence="1" type="primary">azoR</name>
    <name type="ordered locus">Gura_1271</name>
</gene>
<organism>
    <name type="scientific">Geotalea uraniireducens (strain Rf4)</name>
    <name type="common">Geobacter uraniireducens</name>
    <dbReference type="NCBI Taxonomy" id="351605"/>
    <lineage>
        <taxon>Bacteria</taxon>
        <taxon>Pseudomonadati</taxon>
        <taxon>Thermodesulfobacteriota</taxon>
        <taxon>Desulfuromonadia</taxon>
        <taxon>Geobacterales</taxon>
        <taxon>Geobacteraceae</taxon>
        <taxon>Geotalea</taxon>
    </lineage>
</organism>
<sequence>MAKLLYVTCNLKPTEFSCSLSVGKKFLDEYLRQNPADEVYFLDLYRDNIQRIDADVLSGWGKMRNGESFASLTTDEQRKVGHIWKHADQFIAADKYVFVTPMFNLGFPAELKMYIDAVCVVGKTFAYTPTGPVGLLKDQGRKCLHIHSSGGFHFGKEEDHSVPYLKSIMGFMGIEDFESIVVEGVDAIPDRAESFKGAAVEKARGVASQF</sequence>
<dbReference type="EC" id="1.6.5.-" evidence="1"/>
<dbReference type="EC" id="1.7.1.17" evidence="1"/>
<dbReference type="EMBL" id="CP000698">
    <property type="protein sequence ID" value="ABQ25475.1"/>
    <property type="molecule type" value="Genomic_DNA"/>
</dbReference>
<dbReference type="RefSeq" id="WP_011938193.1">
    <property type="nucleotide sequence ID" value="NC_009483.1"/>
</dbReference>
<dbReference type="SMR" id="A5GAC6"/>
<dbReference type="STRING" id="351605.Gura_1271"/>
<dbReference type="KEGG" id="gur:Gura_1271"/>
<dbReference type="HOGENOM" id="CLU_088964_3_1_7"/>
<dbReference type="OrthoDB" id="9787136at2"/>
<dbReference type="Proteomes" id="UP000006695">
    <property type="component" value="Chromosome"/>
</dbReference>
<dbReference type="GO" id="GO:0009055">
    <property type="term" value="F:electron transfer activity"/>
    <property type="evidence" value="ECO:0007669"/>
    <property type="project" value="UniProtKB-UniRule"/>
</dbReference>
<dbReference type="GO" id="GO:0010181">
    <property type="term" value="F:FMN binding"/>
    <property type="evidence" value="ECO:0007669"/>
    <property type="project" value="UniProtKB-UniRule"/>
</dbReference>
<dbReference type="GO" id="GO:0016652">
    <property type="term" value="F:oxidoreductase activity, acting on NAD(P)H as acceptor"/>
    <property type="evidence" value="ECO:0007669"/>
    <property type="project" value="UniProtKB-UniRule"/>
</dbReference>
<dbReference type="GO" id="GO:0016655">
    <property type="term" value="F:oxidoreductase activity, acting on NAD(P)H, quinone or similar compound as acceptor"/>
    <property type="evidence" value="ECO:0007669"/>
    <property type="project" value="InterPro"/>
</dbReference>
<dbReference type="Gene3D" id="3.40.50.360">
    <property type="match status" value="1"/>
</dbReference>
<dbReference type="HAMAP" id="MF_01216">
    <property type="entry name" value="Azoreductase_type1"/>
    <property type="match status" value="1"/>
</dbReference>
<dbReference type="InterPro" id="IPR003680">
    <property type="entry name" value="Flavodoxin_fold"/>
</dbReference>
<dbReference type="InterPro" id="IPR029039">
    <property type="entry name" value="Flavoprotein-like_sf"/>
</dbReference>
<dbReference type="InterPro" id="IPR050104">
    <property type="entry name" value="FMN-dep_NADH:Q_OxRdtase_AzoR1"/>
</dbReference>
<dbReference type="InterPro" id="IPR023048">
    <property type="entry name" value="NADH:quinone_OxRdtase_FMN_depd"/>
</dbReference>
<dbReference type="PANTHER" id="PTHR43741">
    <property type="entry name" value="FMN-DEPENDENT NADH-AZOREDUCTASE 1"/>
    <property type="match status" value="1"/>
</dbReference>
<dbReference type="PANTHER" id="PTHR43741:SF7">
    <property type="entry name" value="FMN-DEPENDENT NADH:QUINONE OXIDOREDUCTASE"/>
    <property type="match status" value="1"/>
</dbReference>
<dbReference type="Pfam" id="PF02525">
    <property type="entry name" value="Flavodoxin_2"/>
    <property type="match status" value="1"/>
</dbReference>
<dbReference type="SUPFAM" id="SSF52218">
    <property type="entry name" value="Flavoproteins"/>
    <property type="match status" value="1"/>
</dbReference>